<organism>
    <name type="scientific">Pseudomonas entomophila (strain L48)</name>
    <dbReference type="NCBI Taxonomy" id="384676"/>
    <lineage>
        <taxon>Bacteria</taxon>
        <taxon>Pseudomonadati</taxon>
        <taxon>Pseudomonadota</taxon>
        <taxon>Gammaproteobacteria</taxon>
        <taxon>Pseudomonadales</taxon>
        <taxon>Pseudomonadaceae</taxon>
        <taxon>Pseudomonas</taxon>
    </lineage>
</organism>
<reference key="1">
    <citation type="journal article" date="2006" name="Nat. Biotechnol.">
        <title>Complete genome sequence of the entomopathogenic and metabolically versatile soil bacterium Pseudomonas entomophila.</title>
        <authorList>
            <person name="Vodovar N."/>
            <person name="Vallenet D."/>
            <person name="Cruveiller S."/>
            <person name="Rouy Z."/>
            <person name="Barbe V."/>
            <person name="Acosta C."/>
            <person name="Cattolico L."/>
            <person name="Jubin C."/>
            <person name="Lajus A."/>
            <person name="Segurens B."/>
            <person name="Vacherie B."/>
            <person name="Wincker P."/>
            <person name="Weissenbach J."/>
            <person name="Lemaitre B."/>
            <person name="Medigue C."/>
            <person name="Boccard F."/>
        </authorList>
    </citation>
    <scope>NUCLEOTIDE SEQUENCE [LARGE SCALE GENOMIC DNA]</scope>
    <source>
        <strain>L48</strain>
    </source>
</reference>
<name>NFUA_PSEE4</name>
<feature type="chain" id="PRO_1000186761" description="Fe/S biogenesis protein NfuA">
    <location>
        <begin position="1"/>
        <end position="194"/>
    </location>
</feature>
<feature type="binding site" evidence="1">
    <location>
        <position position="152"/>
    </location>
    <ligand>
        <name>[4Fe-4S] cluster</name>
        <dbReference type="ChEBI" id="CHEBI:49883"/>
    </ligand>
</feature>
<feature type="binding site" evidence="1">
    <location>
        <position position="155"/>
    </location>
    <ligand>
        <name>[4Fe-4S] cluster</name>
        <dbReference type="ChEBI" id="CHEBI:49883"/>
    </ligand>
</feature>
<protein>
    <recommendedName>
        <fullName evidence="1">Fe/S biogenesis protein NfuA</fullName>
    </recommendedName>
</protein>
<keyword id="KW-0004">4Fe-4S</keyword>
<keyword id="KW-0408">Iron</keyword>
<keyword id="KW-0411">Iron-sulfur</keyword>
<keyword id="KW-0479">Metal-binding</keyword>
<gene>
    <name evidence="1" type="primary">nfuA</name>
    <name type="ordered locus">PSEEN3379</name>
</gene>
<accession>Q1I898</accession>
<dbReference type="EMBL" id="CT573326">
    <property type="protein sequence ID" value="CAK16130.1"/>
    <property type="molecule type" value="Genomic_DNA"/>
</dbReference>
<dbReference type="RefSeq" id="WP_011534517.1">
    <property type="nucleotide sequence ID" value="NC_008027.1"/>
</dbReference>
<dbReference type="SMR" id="Q1I898"/>
<dbReference type="STRING" id="384676.PSEEN3379"/>
<dbReference type="GeneID" id="32806462"/>
<dbReference type="KEGG" id="pen:PSEEN3379"/>
<dbReference type="eggNOG" id="COG0316">
    <property type="taxonomic scope" value="Bacteria"/>
</dbReference>
<dbReference type="eggNOG" id="COG0694">
    <property type="taxonomic scope" value="Bacteria"/>
</dbReference>
<dbReference type="HOGENOM" id="CLU_094569_0_0_6"/>
<dbReference type="OrthoDB" id="9785450at2"/>
<dbReference type="Proteomes" id="UP000000658">
    <property type="component" value="Chromosome"/>
</dbReference>
<dbReference type="GO" id="GO:0051539">
    <property type="term" value="F:4 iron, 4 sulfur cluster binding"/>
    <property type="evidence" value="ECO:0007669"/>
    <property type="project" value="UniProtKB-UniRule"/>
</dbReference>
<dbReference type="GO" id="GO:0005506">
    <property type="term" value="F:iron ion binding"/>
    <property type="evidence" value="ECO:0007669"/>
    <property type="project" value="InterPro"/>
</dbReference>
<dbReference type="GO" id="GO:0016226">
    <property type="term" value="P:iron-sulfur cluster assembly"/>
    <property type="evidence" value="ECO:0007669"/>
    <property type="project" value="UniProtKB-UniRule"/>
</dbReference>
<dbReference type="GO" id="GO:0051604">
    <property type="term" value="P:protein maturation"/>
    <property type="evidence" value="ECO:0007669"/>
    <property type="project" value="UniProtKB-UniRule"/>
</dbReference>
<dbReference type="Gene3D" id="3.30.300.130">
    <property type="entry name" value="Fe-S cluster assembly (FSCA)"/>
    <property type="match status" value="1"/>
</dbReference>
<dbReference type="Gene3D" id="2.60.300.12">
    <property type="entry name" value="HesB-like domain"/>
    <property type="match status" value="1"/>
</dbReference>
<dbReference type="HAMAP" id="MF_01637">
    <property type="entry name" value="Fe_S_biogen_NfuA"/>
    <property type="match status" value="1"/>
</dbReference>
<dbReference type="InterPro" id="IPR017726">
    <property type="entry name" value="Fe/S_biogenesis_protein_NfuA"/>
</dbReference>
<dbReference type="InterPro" id="IPR000361">
    <property type="entry name" value="FeS_biogenesis"/>
</dbReference>
<dbReference type="InterPro" id="IPR034904">
    <property type="entry name" value="FSCA_dom_sf"/>
</dbReference>
<dbReference type="InterPro" id="IPR035903">
    <property type="entry name" value="HesB-like_dom_sf"/>
</dbReference>
<dbReference type="InterPro" id="IPR001075">
    <property type="entry name" value="NIF_FeS_clus_asmbl_NifU_C"/>
</dbReference>
<dbReference type="NCBIfam" id="TIGR03341">
    <property type="entry name" value="YhgI_GntY"/>
    <property type="match status" value="1"/>
</dbReference>
<dbReference type="PANTHER" id="PTHR11178:SF51">
    <property type="entry name" value="FE_S BIOGENESIS PROTEIN NFUA"/>
    <property type="match status" value="1"/>
</dbReference>
<dbReference type="PANTHER" id="PTHR11178">
    <property type="entry name" value="IRON-SULFUR CLUSTER SCAFFOLD PROTEIN NFU-RELATED"/>
    <property type="match status" value="1"/>
</dbReference>
<dbReference type="Pfam" id="PF01521">
    <property type="entry name" value="Fe-S_biosyn"/>
    <property type="match status" value="1"/>
</dbReference>
<dbReference type="Pfam" id="PF01106">
    <property type="entry name" value="NifU"/>
    <property type="match status" value="1"/>
</dbReference>
<dbReference type="SUPFAM" id="SSF117916">
    <property type="entry name" value="Fe-S cluster assembly (FSCA) domain-like"/>
    <property type="match status" value="1"/>
</dbReference>
<dbReference type="SUPFAM" id="SSF89360">
    <property type="entry name" value="HesB-like domain"/>
    <property type="match status" value="1"/>
</dbReference>
<comment type="function">
    <text evidence="1">Involved in iron-sulfur cluster biogenesis. Binds a 4Fe-4S cluster, can transfer this cluster to apoproteins, and thereby intervenes in the maturation of Fe/S proteins. Could also act as a scaffold/chaperone for damaged Fe/S proteins.</text>
</comment>
<comment type="cofactor">
    <cofactor evidence="1">
        <name>[4Fe-4S] cluster</name>
        <dbReference type="ChEBI" id="CHEBI:49883"/>
    </cofactor>
    <text evidence="1">Binds 1 [4Fe-4S] cluster per subunit. The cluster is presumably bound at the interface of two monomers.</text>
</comment>
<comment type="subunit">
    <text evidence="1">Homodimer.</text>
</comment>
<comment type="similarity">
    <text evidence="1">Belongs to the NfuA family.</text>
</comment>
<evidence type="ECO:0000255" key="1">
    <source>
        <dbReference type="HAMAP-Rule" id="MF_01637"/>
    </source>
</evidence>
<sequence>MSAITITDAAHDYLADLLSKQNTPGIGIRIFITQPGTQYAETCIAYCKPGEEKPDDEPVGLKSFTAYLDAVSVPFLEDALVDYATDRMGGQLTIKAPNAKVPMVNEDSPINERINYYLQTEINPGLASHGGAVSLVDVVDDGIAVLQFGGGCQGCGQADVTLKEGIERTLLERIPELKGVRDVTDHTNKENAYY</sequence>
<proteinExistence type="inferred from homology"/>